<reference evidence="11" key="1">
    <citation type="journal article" date="1998" name="Science">
        <title>Genome sequence of the nematode C. elegans: a platform for investigating biology.</title>
        <authorList>
            <consortium name="The C. elegans sequencing consortium"/>
        </authorList>
    </citation>
    <scope>NUCLEOTIDE SEQUENCE [LARGE SCALE GENOMIC DNA]</scope>
    <source>
        <strain evidence="11">Bristol N2</strain>
    </source>
</reference>
<reference evidence="10" key="2">
    <citation type="journal article" date="2008" name="Cell Div.">
        <title>Genetic analysis of the spindle checkpoint genes san-1, mdf-2, bub-3 and the CENP-F homologues hcp-1 and hcp-2 in Caenorhabditis elegans.</title>
        <authorList>
            <person name="Hajeri V.A."/>
            <person name="Stewart A.M."/>
            <person name="Moore L.L."/>
            <person name="Padilla P.A."/>
        </authorList>
    </citation>
    <scope>FUNCTION</scope>
    <scope>DISRUPTION PHENOTYPE</scope>
</reference>
<reference evidence="10" key="3">
    <citation type="journal article" date="2009" name="Mol. Biol. Cell">
        <title>Systematic analysis in Caenorhabditis elegans reveals that the spindle checkpoint is composed of two largely independent branches.</title>
        <authorList>
            <person name="Essex A."/>
            <person name="Dammermann A."/>
            <person name="Lewellyn L."/>
            <person name="Oegema K."/>
            <person name="Desai A."/>
        </authorList>
    </citation>
    <scope>FUNCTION</scope>
    <scope>SUBCELLULAR LOCATION</scope>
</reference>
<reference evidence="10" key="4">
    <citation type="journal article" date="2014" name="J. Cell Biol.">
        <title>A Bub1-Mad1 interaction targets the Mad1-Mad2 complex to unattached kinetochores to initiate the spindle checkpoint.</title>
        <authorList>
            <person name="Moyle M.W."/>
            <person name="Kim T."/>
            <person name="Hattersley N."/>
            <person name="Espeut J."/>
            <person name="Cheerambathur D.K."/>
            <person name="Oegema K."/>
            <person name="Desai A."/>
        </authorList>
    </citation>
    <scope>INTERACTION WITH BUB-1</scope>
</reference>
<reference evidence="10" key="5">
    <citation type="journal article" date="2015" name="J. Cell Biol.">
        <title>Kinetochore-localized BUB-1/BUB-3 complex promotes anaphase onset in C. elegans.</title>
        <authorList>
            <person name="Kim T."/>
            <person name="Moyle M.W."/>
            <person name="Lara-Gonzalez P."/>
            <person name="De Groot C."/>
            <person name="Oegema K."/>
            <person name="Desai A."/>
        </authorList>
    </citation>
    <scope>FUNCTION</scope>
    <scope>INTERACTION WITH BUB-1</scope>
    <scope>SUBCELLULAR LOCATION</scope>
    <scope>DISRUPTION PHENOTYPE</scope>
</reference>
<reference evidence="10" key="6">
    <citation type="journal article" date="2015" name="J. Cell Biol.">
        <title>Spindle assembly checkpoint proteins regulate and monitor meiotic synapsis in C. elegans.</title>
        <authorList>
            <person name="Bohr T."/>
            <person name="Nelson C.R."/>
            <person name="Klee E."/>
            <person name="Bhalla N."/>
        </authorList>
    </citation>
    <scope>FUNCTION</scope>
    <scope>DISRUPTION PHENOTYPE</scope>
</reference>
<organism evidence="11">
    <name type="scientific">Caenorhabditis elegans</name>
    <dbReference type="NCBI Taxonomy" id="6239"/>
    <lineage>
        <taxon>Eukaryota</taxon>
        <taxon>Metazoa</taxon>
        <taxon>Ecdysozoa</taxon>
        <taxon>Nematoda</taxon>
        <taxon>Chromadorea</taxon>
        <taxon>Rhabditida</taxon>
        <taxon>Rhabditina</taxon>
        <taxon>Rhabditomorpha</taxon>
        <taxon>Rhabditoidea</taxon>
        <taxon>Rhabditidae</taxon>
        <taxon>Peloderinae</taxon>
        <taxon>Caenorhabditis</taxon>
    </lineage>
</organism>
<comment type="function">
    <text evidence="5 6 8 9">Has a dual function in spindle-assembly checkpoint signaling and in promoting the establishment of correct kinetochore-microtubule (K-MT) attachments (PubMed:18248670, PubMed:19109417, PubMed:25987605). Promotes the formation of stable end-on bipolar attachments of chromosomes (PubMed:25987605). Necessary for expression and kinetochore localization of bub-1 (PubMed:19109417, PubMed:25987605). Plays a role in synapsis checkpoint signaling inducing apoptosis in response to unsynapsed chromosomes and thus controlling chromosomal segregation during oocyte meiosis (PubMed:26483555).</text>
</comment>
<comment type="subunit">
    <text evidence="7 8">May interact with bub-1; for localization at the kinetochore and the onset of anaphase.</text>
</comment>
<comment type="interaction">
    <interactant intactId="EBI-331258">
        <id>Q9XWH0</id>
    </interactant>
    <interactant intactId="EBI-316339">
        <id>O02053</id>
        <label>san-1</label>
    </interactant>
    <organismsDiffer>false</organismsDiffer>
    <experiments>5</experiments>
</comment>
<comment type="subcellular location">
    <subcellularLocation>
        <location evidence="6 8">Chromosome</location>
        <location evidence="6 8">Centromere</location>
        <location evidence="6 8">Kinetochore</location>
    </subcellularLocation>
    <subcellularLocation>
        <location evidence="10">Nucleus</location>
    </subcellularLocation>
    <text evidence="6 8">Localizes at kinetochores on condensing chromosomes in late prophase and during metaphase (PubMed:19109417). Localization to the kinetochore is dependent on bub-1 (PubMed:25987605).</text>
</comment>
<comment type="disruption phenotype">
    <text evidence="5 8 9">Viable, but with a reduced brood size (PubMed:25987605). Reduced bub-1 expression and localization at the kinetochore which may lead to the delay in the onset of anaphase during embryogenesis (PubMed:25987605). Defective synapsis with increased numbers of nuclei that contain asymmetrically aligned (clustered) chromosomes (PubMed:26483555). RNAi-mediated knockdown results in reduced survival as compared to wild-type animals in anoxic conditions (PubMed:18248670).</text>
</comment>
<comment type="similarity">
    <text evidence="10">Belongs to the WD repeat BUB3 family.</text>
</comment>
<dbReference type="EMBL" id="BX284602">
    <property type="protein sequence ID" value="CAA21698.1"/>
    <property type="molecule type" value="Genomic_DNA"/>
</dbReference>
<dbReference type="PIR" id="T27185">
    <property type="entry name" value="T27185"/>
</dbReference>
<dbReference type="RefSeq" id="NP_496879.1">
    <property type="nucleotide sequence ID" value="NM_064478.7"/>
</dbReference>
<dbReference type="SMR" id="Q9XWH0"/>
<dbReference type="ComplexPortal" id="CPX-400">
    <property type="entry name" value="Bub-1-Bub-3 complex"/>
</dbReference>
<dbReference type="ComplexPortal" id="CPX-401">
    <property type="entry name" value="Mitotic checkpoint complex, Mad-1-Mad-2-Bub-1-Bub-3 subcomplex"/>
</dbReference>
<dbReference type="DIP" id="DIP-26143N"/>
<dbReference type="FunCoup" id="Q9XWH0">
    <property type="interactions" value="2651"/>
</dbReference>
<dbReference type="IntAct" id="Q9XWH0">
    <property type="interactions" value="7"/>
</dbReference>
<dbReference type="STRING" id="6239.Y54G9A.6.1"/>
<dbReference type="PaxDb" id="6239-Y54G9A.6"/>
<dbReference type="PeptideAtlas" id="Q9XWH0"/>
<dbReference type="EnsemblMetazoa" id="Y54G9A.6.1">
    <property type="protein sequence ID" value="Y54G9A.6.1"/>
    <property type="gene ID" value="WBGene00013209"/>
</dbReference>
<dbReference type="GeneID" id="175018"/>
<dbReference type="KEGG" id="cel:CELE_Y54G9A.6"/>
<dbReference type="UCSC" id="Y54G9A.6">
    <property type="organism name" value="c. elegans"/>
</dbReference>
<dbReference type="AGR" id="WB:WBGene00013209"/>
<dbReference type="CTD" id="175018"/>
<dbReference type="WormBase" id="Y54G9A.6">
    <property type="protein sequence ID" value="CE19233"/>
    <property type="gene ID" value="WBGene00013209"/>
    <property type="gene designation" value="bub-3"/>
</dbReference>
<dbReference type="eggNOG" id="KOG1036">
    <property type="taxonomic scope" value="Eukaryota"/>
</dbReference>
<dbReference type="GeneTree" id="ENSGT00950000183091"/>
<dbReference type="HOGENOM" id="CLU_038526_0_0_1"/>
<dbReference type="InParanoid" id="Q9XWH0"/>
<dbReference type="OMA" id="WDSTLHI"/>
<dbReference type="OrthoDB" id="10262475at2759"/>
<dbReference type="PhylomeDB" id="Q9XWH0"/>
<dbReference type="Reactome" id="R-CEL-141430">
    <property type="pathway name" value="Inactivation of APC/C via direct inhibition of the APC/C complex"/>
</dbReference>
<dbReference type="PRO" id="PR:Q9XWH0"/>
<dbReference type="Proteomes" id="UP000001940">
    <property type="component" value="Chromosome II"/>
</dbReference>
<dbReference type="Bgee" id="WBGene00013209">
    <property type="expression patterns" value="Expressed in germ line (C elegans) and 4 other cell types or tissues"/>
</dbReference>
<dbReference type="GO" id="GO:1990298">
    <property type="term" value="C:bub1-bub3 complex"/>
    <property type="evidence" value="ECO:0000353"/>
    <property type="project" value="ComplexPortal"/>
</dbReference>
<dbReference type="GO" id="GO:0000776">
    <property type="term" value="C:kinetochore"/>
    <property type="evidence" value="ECO:0000250"/>
    <property type="project" value="UniProtKB"/>
</dbReference>
<dbReference type="GO" id="GO:0033597">
    <property type="term" value="C:mitotic checkpoint complex"/>
    <property type="evidence" value="ECO:0000318"/>
    <property type="project" value="GO_Central"/>
</dbReference>
<dbReference type="GO" id="GO:0005654">
    <property type="term" value="C:nucleoplasm"/>
    <property type="evidence" value="ECO:0000314"/>
    <property type="project" value="UniProtKB"/>
</dbReference>
<dbReference type="GO" id="GO:0043130">
    <property type="term" value="F:ubiquitin binding"/>
    <property type="evidence" value="ECO:0000318"/>
    <property type="project" value="GO_Central"/>
</dbReference>
<dbReference type="GO" id="GO:1990299">
    <property type="term" value="P:Bub1-Bub3 complex localization to kinetochore"/>
    <property type="evidence" value="ECO:0000314"/>
    <property type="project" value="ComplexPortal"/>
</dbReference>
<dbReference type="GO" id="GO:0051301">
    <property type="term" value="P:cell division"/>
    <property type="evidence" value="ECO:0007669"/>
    <property type="project" value="UniProtKB-KW"/>
</dbReference>
<dbReference type="GO" id="GO:0009792">
    <property type="term" value="P:embryo development ending in birth or egg hatching"/>
    <property type="evidence" value="ECO:0000316"/>
    <property type="project" value="WormBase"/>
</dbReference>
<dbReference type="GO" id="GO:0033316">
    <property type="term" value="P:meiotic spindle assembly checkpoint signaling"/>
    <property type="evidence" value="ECO:0000316"/>
    <property type="project" value="WormBase"/>
</dbReference>
<dbReference type="GO" id="GO:0007094">
    <property type="term" value="P:mitotic spindle assembly checkpoint signaling"/>
    <property type="evidence" value="ECO:0000314"/>
    <property type="project" value="ComplexPortal"/>
</dbReference>
<dbReference type="GO" id="GO:0051726">
    <property type="term" value="P:regulation of cell cycle"/>
    <property type="evidence" value="ECO:0000315"/>
    <property type="project" value="UniProtKB"/>
</dbReference>
<dbReference type="FunFam" id="2.130.10.10:FF:001580">
    <property type="entry name" value="Mitotic checkpoint protein bub-3"/>
    <property type="match status" value="1"/>
</dbReference>
<dbReference type="Gene3D" id="2.130.10.10">
    <property type="entry name" value="YVTN repeat-like/Quinoprotein amine dehydrogenase"/>
    <property type="match status" value="1"/>
</dbReference>
<dbReference type="InterPro" id="IPR020472">
    <property type="entry name" value="G-protein_beta_WD-40_rep"/>
</dbReference>
<dbReference type="InterPro" id="IPR015943">
    <property type="entry name" value="WD40/YVTN_repeat-like_dom_sf"/>
</dbReference>
<dbReference type="InterPro" id="IPR019775">
    <property type="entry name" value="WD40_repeat_CS"/>
</dbReference>
<dbReference type="InterPro" id="IPR036322">
    <property type="entry name" value="WD40_repeat_dom_sf"/>
</dbReference>
<dbReference type="InterPro" id="IPR001680">
    <property type="entry name" value="WD40_rpt"/>
</dbReference>
<dbReference type="PANTHER" id="PTHR10971">
    <property type="entry name" value="MRNA EXPORT FACTOR AND BUB3"/>
    <property type="match status" value="1"/>
</dbReference>
<dbReference type="Pfam" id="PF00400">
    <property type="entry name" value="WD40"/>
    <property type="match status" value="2"/>
</dbReference>
<dbReference type="PRINTS" id="PR00320">
    <property type="entry name" value="GPROTEINBRPT"/>
</dbReference>
<dbReference type="SMART" id="SM00320">
    <property type="entry name" value="WD40"/>
    <property type="match status" value="5"/>
</dbReference>
<dbReference type="SUPFAM" id="SSF50978">
    <property type="entry name" value="WD40 repeat-like"/>
    <property type="match status" value="1"/>
</dbReference>
<dbReference type="PROSITE" id="PS00678">
    <property type="entry name" value="WD_REPEATS_1"/>
    <property type="match status" value="1"/>
</dbReference>
<dbReference type="PROSITE" id="PS50082">
    <property type="entry name" value="WD_REPEATS_2"/>
    <property type="match status" value="2"/>
</dbReference>
<dbReference type="PROSITE" id="PS50294">
    <property type="entry name" value="WD_REPEATS_REGION"/>
    <property type="match status" value="1"/>
</dbReference>
<accession>Q9XWH0</accession>
<sequence length="343" mass="38127">MSTYQAATIVAAPNEFRVPFPPFVQISKVQFQREAGSRLLAASGWDGTCRVYEVGKLGDISEKLVFTHGKPLLTCTFAGYNKVAFGGVDHNVKLADIETGNGTQLGSHALAVRCMEFNPMSSLIVSGGWDSSVKLWDARSYGNGAIESVNVSSSVYAMDVLKHTILVGTKDRKIFMYDSRKLREPLQVRDSPLKYQTRAVQFFPTGEAFVVSSIEGRVAVEYVDQSGEEMMKRKYAFKCHREKDTDGTELIHPVHTVAFHPKYGTFATGGADGIVNIWDPFNRKRIIQLHKFETSISSLSFNEDGSQLAIATSYQYEKEIDPSPLPNNSITIRHITDPESRPK</sequence>
<name>BUB3_CAEEL</name>
<protein>
    <recommendedName>
        <fullName evidence="1">Mitotic checkpoint protein bub-3</fullName>
    </recommendedName>
    <alternativeName>
        <fullName evidence="2">Budding uninhibited by benzimidazole 3</fullName>
    </alternativeName>
</protein>
<evidence type="ECO:0000250" key="1">
    <source>
        <dbReference type="UniProtKB" id="O43684"/>
    </source>
</evidence>
<evidence type="ECO:0000250" key="2">
    <source>
        <dbReference type="UniProtKB" id="Q21776"/>
    </source>
</evidence>
<evidence type="ECO:0000255" key="3"/>
<evidence type="ECO:0000256" key="4">
    <source>
        <dbReference type="SAM" id="MobiDB-lite"/>
    </source>
</evidence>
<evidence type="ECO:0000269" key="5">
    <source>
    </source>
</evidence>
<evidence type="ECO:0000269" key="6">
    <source>
    </source>
</evidence>
<evidence type="ECO:0000269" key="7">
    <source>
    </source>
</evidence>
<evidence type="ECO:0000269" key="8">
    <source>
    </source>
</evidence>
<evidence type="ECO:0000269" key="9">
    <source>
    </source>
</evidence>
<evidence type="ECO:0000305" key="10"/>
<evidence type="ECO:0000312" key="11">
    <source>
        <dbReference type="Proteomes" id="UP000001940"/>
    </source>
</evidence>
<evidence type="ECO:0000312" key="12">
    <source>
        <dbReference type="WormBase" id="Y54G9A.6"/>
    </source>
</evidence>
<gene>
    <name evidence="12" type="primary">bub-3</name>
    <name evidence="12" type="ORF">Y54G9A.6</name>
</gene>
<feature type="chain" id="PRO_0000436607" description="Mitotic checkpoint protein bub-3" evidence="10">
    <location>
        <begin position="1"/>
        <end position="343"/>
    </location>
</feature>
<feature type="repeat" description="WD 1" evidence="3">
    <location>
        <begin position="21"/>
        <end position="62"/>
    </location>
</feature>
<feature type="repeat" description="WD 2" evidence="3">
    <location>
        <begin position="67"/>
        <end position="105"/>
    </location>
</feature>
<feature type="repeat" description="WD 3" evidence="3">
    <location>
        <begin position="107"/>
        <end position="146"/>
    </location>
</feature>
<feature type="repeat" description="WD 4" evidence="3">
    <location>
        <begin position="150"/>
        <end position="187"/>
    </location>
</feature>
<feature type="repeat" description="WD 5" evidence="3">
    <location>
        <begin position="192"/>
        <end position="232"/>
    </location>
</feature>
<feature type="repeat" description="WD 6" evidence="3">
    <location>
        <begin position="249"/>
        <end position="288"/>
    </location>
</feature>
<feature type="repeat" description="WD 7" evidence="3">
    <location>
        <begin position="291"/>
        <end position="331"/>
    </location>
</feature>
<feature type="region of interest" description="Disordered" evidence="4">
    <location>
        <begin position="322"/>
        <end position="343"/>
    </location>
</feature>
<feature type="compositionally biased region" description="Basic and acidic residues" evidence="4">
    <location>
        <begin position="334"/>
        <end position="343"/>
    </location>
</feature>
<proteinExistence type="evidence at protein level"/>
<keyword id="KW-0131">Cell cycle</keyword>
<keyword id="KW-0132">Cell division</keyword>
<keyword id="KW-0137">Centromere</keyword>
<keyword id="KW-0158">Chromosome</keyword>
<keyword id="KW-0995">Kinetochore</keyword>
<keyword id="KW-0469">Meiosis</keyword>
<keyword id="KW-0498">Mitosis</keyword>
<keyword id="KW-0539">Nucleus</keyword>
<keyword id="KW-1185">Reference proteome</keyword>
<keyword id="KW-0677">Repeat</keyword>
<keyword id="KW-0853">WD repeat</keyword>